<gene>
    <name evidence="1" type="primary">gatA</name>
    <name type="ordered locus">FN0754</name>
</gene>
<keyword id="KW-0067">ATP-binding</keyword>
<keyword id="KW-0436">Ligase</keyword>
<keyword id="KW-0547">Nucleotide-binding</keyword>
<keyword id="KW-0648">Protein biosynthesis</keyword>
<keyword id="KW-1185">Reference proteome</keyword>
<evidence type="ECO:0000255" key="1">
    <source>
        <dbReference type="HAMAP-Rule" id="MF_00120"/>
    </source>
</evidence>
<feature type="chain" id="PRO_0000105163" description="Glutamyl-tRNA(Gln) amidotransferase subunit A">
    <location>
        <begin position="1"/>
        <end position="487"/>
    </location>
</feature>
<feature type="active site" description="Charge relay system" evidence="1">
    <location>
        <position position="82"/>
    </location>
</feature>
<feature type="active site" description="Charge relay system" evidence="1">
    <location>
        <position position="157"/>
    </location>
</feature>
<feature type="active site" description="Acyl-ester intermediate" evidence="1">
    <location>
        <position position="181"/>
    </location>
</feature>
<comment type="function">
    <text evidence="1">Allows the formation of correctly charged Gln-tRNA(Gln) through the transamidation of misacylated Glu-tRNA(Gln) in organisms which lack glutaminyl-tRNA synthetase. The reaction takes place in the presence of glutamine and ATP through an activated gamma-phospho-Glu-tRNA(Gln).</text>
</comment>
<comment type="catalytic activity">
    <reaction evidence="1">
        <text>L-glutamyl-tRNA(Gln) + L-glutamine + ATP + H2O = L-glutaminyl-tRNA(Gln) + L-glutamate + ADP + phosphate + H(+)</text>
        <dbReference type="Rhea" id="RHEA:17521"/>
        <dbReference type="Rhea" id="RHEA-COMP:9681"/>
        <dbReference type="Rhea" id="RHEA-COMP:9684"/>
        <dbReference type="ChEBI" id="CHEBI:15377"/>
        <dbReference type="ChEBI" id="CHEBI:15378"/>
        <dbReference type="ChEBI" id="CHEBI:29985"/>
        <dbReference type="ChEBI" id="CHEBI:30616"/>
        <dbReference type="ChEBI" id="CHEBI:43474"/>
        <dbReference type="ChEBI" id="CHEBI:58359"/>
        <dbReference type="ChEBI" id="CHEBI:78520"/>
        <dbReference type="ChEBI" id="CHEBI:78521"/>
        <dbReference type="ChEBI" id="CHEBI:456216"/>
        <dbReference type="EC" id="6.3.5.7"/>
    </reaction>
</comment>
<comment type="subunit">
    <text evidence="1">Heterotrimer of A, B and C subunits.</text>
</comment>
<comment type="similarity">
    <text evidence="1">Belongs to the amidase family. GatA subfamily.</text>
</comment>
<reference key="1">
    <citation type="journal article" date="2002" name="J. Bacteriol.">
        <title>Genome sequence and analysis of the oral bacterium Fusobacterium nucleatum strain ATCC 25586.</title>
        <authorList>
            <person name="Kapatral V."/>
            <person name="Anderson I."/>
            <person name="Ivanova N."/>
            <person name="Reznik G."/>
            <person name="Los T."/>
            <person name="Lykidis A."/>
            <person name="Bhattacharyya A."/>
            <person name="Bartman A."/>
            <person name="Gardner W."/>
            <person name="Grechkin G."/>
            <person name="Zhu L."/>
            <person name="Vasieva O."/>
            <person name="Chu L."/>
            <person name="Kogan Y."/>
            <person name="Chaga O."/>
            <person name="Goltsman E."/>
            <person name="Bernal A."/>
            <person name="Larsen N."/>
            <person name="D'Souza M."/>
            <person name="Walunas T."/>
            <person name="Pusch G."/>
            <person name="Haselkorn R."/>
            <person name="Fonstein M."/>
            <person name="Kyrpides N.C."/>
            <person name="Overbeek R."/>
        </authorList>
    </citation>
    <scope>NUCLEOTIDE SEQUENCE [LARGE SCALE GENOMIC DNA]</scope>
    <source>
        <strain>ATCC 25586 / DSM 15643 / BCRC 10681 / CIP 101130 / JCM 8532 / KCTC 2640 / LMG 13131 / VPI 4355</strain>
    </source>
</reference>
<organism>
    <name type="scientific">Fusobacterium nucleatum subsp. nucleatum (strain ATCC 25586 / DSM 15643 / BCRC 10681 / CIP 101130 / JCM 8532 / KCTC 2640 / LMG 13131 / VPI 4355)</name>
    <dbReference type="NCBI Taxonomy" id="190304"/>
    <lineage>
        <taxon>Bacteria</taxon>
        <taxon>Fusobacteriati</taxon>
        <taxon>Fusobacteriota</taxon>
        <taxon>Fusobacteriia</taxon>
        <taxon>Fusobacteriales</taxon>
        <taxon>Fusobacteriaceae</taxon>
        <taxon>Fusobacterium</taxon>
    </lineage>
</organism>
<accession>Q8R679</accession>
<protein>
    <recommendedName>
        <fullName evidence="1">Glutamyl-tRNA(Gln) amidotransferase subunit A</fullName>
        <shortName evidence="1">Glu-ADT subunit A</shortName>
        <ecNumber evidence="1">6.3.5.7</ecNumber>
    </recommendedName>
</protein>
<sequence>MVYNNLYELTAKELRDKFLSNELSAEEIVNSFYERIEKVEDKIKSFVSLRKDKALDEARKLDEKRKNGEKLGRLAGIPIAIKDNILMEGQKSTSCSKILENYIGIYDATVVKKLKEEDAIIIGITNMDEFAMGSTTKTSFHHKTSNPWDLNRVPGGSSGGAAASVAAQEVPISLGSDTGGSVRQPASFCGVVGFKPTYGRVSRYGLMAFASSLDQIGTLAKTVEDIAICMNVIAGVDDYDATVSKKEVPDYTEFLNKDIKGLKIGLPKEYFIEGLNPEIKNVVDNSVKALKELGAEVVEISLPHTKYAVPTYYVLAPAEASSNLARFDGIRYGYRAKDYTDLESLYVKTRSEGFGAEVKRRIMIGTYVLSAGFYDAYFKKAQKVRTLIKQDFENVLNEVDVILTPVAPSVAFKLSDTKTPIELYLEDIFTISANLAGVPAISLPGGLVDNLPVGVQFMGKPFDEEILIKIADALEKKIGRLNLPKLD</sequence>
<proteinExistence type="inferred from homology"/>
<dbReference type="EC" id="6.3.5.7" evidence="1"/>
<dbReference type="EMBL" id="AE009951">
    <property type="protein sequence ID" value="AAL94950.1"/>
    <property type="molecule type" value="Genomic_DNA"/>
</dbReference>
<dbReference type="RefSeq" id="NP_603651.1">
    <property type="nucleotide sequence ID" value="NC_003454.1"/>
</dbReference>
<dbReference type="RefSeq" id="WP_005903492.1">
    <property type="nucleotide sequence ID" value="NZ_OZ209243.1"/>
</dbReference>
<dbReference type="SMR" id="Q8R679"/>
<dbReference type="FunCoup" id="Q8R679">
    <property type="interactions" value="389"/>
</dbReference>
<dbReference type="STRING" id="190304.FN0754"/>
<dbReference type="PaxDb" id="190304-FN0754"/>
<dbReference type="EnsemblBacteria" id="AAL94950">
    <property type="protein sequence ID" value="AAL94950"/>
    <property type="gene ID" value="FN0754"/>
</dbReference>
<dbReference type="GeneID" id="79783746"/>
<dbReference type="KEGG" id="fnu:FN0754"/>
<dbReference type="PATRIC" id="fig|190304.8.peg.1317"/>
<dbReference type="eggNOG" id="COG0154">
    <property type="taxonomic scope" value="Bacteria"/>
</dbReference>
<dbReference type="HOGENOM" id="CLU_009600_0_3_0"/>
<dbReference type="InParanoid" id="Q8R679"/>
<dbReference type="BioCyc" id="FNUC190304:G1FZS-1340-MONOMER"/>
<dbReference type="Proteomes" id="UP000002521">
    <property type="component" value="Chromosome"/>
</dbReference>
<dbReference type="GO" id="GO:0030956">
    <property type="term" value="C:glutamyl-tRNA(Gln) amidotransferase complex"/>
    <property type="evidence" value="ECO:0007669"/>
    <property type="project" value="InterPro"/>
</dbReference>
<dbReference type="GO" id="GO:0005524">
    <property type="term" value="F:ATP binding"/>
    <property type="evidence" value="ECO:0007669"/>
    <property type="project" value="UniProtKB-KW"/>
</dbReference>
<dbReference type="GO" id="GO:0050567">
    <property type="term" value="F:glutaminyl-tRNA synthase (glutamine-hydrolyzing) activity"/>
    <property type="evidence" value="ECO:0007669"/>
    <property type="project" value="UniProtKB-UniRule"/>
</dbReference>
<dbReference type="GO" id="GO:0006412">
    <property type="term" value="P:translation"/>
    <property type="evidence" value="ECO:0007669"/>
    <property type="project" value="UniProtKB-UniRule"/>
</dbReference>
<dbReference type="Gene3D" id="3.90.1300.10">
    <property type="entry name" value="Amidase signature (AS) domain"/>
    <property type="match status" value="1"/>
</dbReference>
<dbReference type="HAMAP" id="MF_00120">
    <property type="entry name" value="GatA"/>
    <property type="match status" value="1"/>
</dbReference>
<dbReference type="InterPro" id="IPR000120">
    <property type="entry name" value="Amidase"/>
</dbReference>
<dbReference type="InterPro" id="IPR020556">
    <property type="entry name" value="Amidase_CS"/>
</dbReference>
<dbReference type="InterPro" id="IPR023631">
    <property type="entry name" value="Amidase_dom"/>
</dbReference>
<dbReference type="InterPro" id="IPR036928">
    <property type="entry name" value="AS_sf"/>
</dbReference>
<dbReference type="InterPro" id="IPR004412">
    <property type="entry name" value="GatA"/>
</dbReference>
<dbReference type="NCBIfam" id="TIGR00132">
    <property type="entry name" value="gatA"/>
    <property type="match status" value="1"/>
</dbReference>
<dbReference type="PANTHER" id="PTHR11895:SF151">
    <property type="entry name" value="GLUTAMYL-TRNA(GLN) AMIDOTRANSFERASE SUBUNIT A"/>
    <property type="match status" value="1"/>
</dbReference>
<dbReference type="PANTHER" id="PTHR11895">
    <property type="entry name" value="TRANSAMIDASE"/>
    <property type="match status" value="1"/>
</dbReference>
<dbReference type="Pfam" id="PF01425">
    <property type="entry name" value="Amidase"/>
    <property type="match status" value="1"/>
</dbReference>
<dbReference type="PIRSF" id="PIRSF001221">
    <property type="entry name" value="Amidase_fungi"/>
    <property type="match status" value="1"/>
</dbReference>
<dbReference type="SUPFAM" id="SSF75304">
    <property type="entry name" value="Amidase signature (AS) enzymes"/>
    <property type="match status" value="1"/>
</dbReference>
<dbReference type="PROSITE" id="PS00571">
    <property type="entry name" value="AMIDASES"/>
    <property type="match status" value="1"/>
</dbReference>
<name>GATA_FUSNN</name>